<protein>
    <recommendedName>
        <fullName>UPF0150 protein AF_0072.1</fullName>
    </recommendedName>
</protein>
<accession>P58023</accession>
<dbReference type="EMBL" id="AE000782">
    <property type="status" value="NOT_ANNOTATED_CDS"/>
    <property type="molecule type" value="Genomic_DNA"/>
</dbReference>
<dbReference type="SMR" id="P58023"/>
<dbReference type="Proteomes" id="UP000002199">
    <property type="component" value="Chromosome"/>
</dbReference>
<dbReference type="Gene3D" id="3.30.160.250">
    <property type="match status" value="1"/>
</dbReference>
<dbReference type="InterPro" id="IPR035069">
    <property type="entry name" value="TTHA1013/TTHA0281-like"/>
</dbReference>
<dbReference type="SUPFAM" id="SSF143100">
    <property type="entry name" value="TTHA1013/TTHA0281-like"/>
    <property type="match status" value="1"/>
</dbReference>
<proteinExistence type="inferred from homology"/>
<sequence>MSYARGEKIDGVIFLVEETDDGYTARALGHSIFTQAGSLEELKEMVKDAVECHFEEGERPKLSDFT</sequence>
<keyword id="KW-1185">Reference proteome</keyword>
<reference key="1">
    <citation type="journal article" date="1997" name="Nature">
        <title>The complete genome sequence of the hyperthermophilic, sulphate-reducing archaeon Archaeoglobus fulgidus.</title>
        <authorList>
            <person name="Klenk H.-P."/>
            <person name="Clayton R.A."/>
            <person name="Tomb J.-F."/>
            <person name="White O."/>
            <person name="Nelson K.E."/>
            <person name="Ketchum K.A."/>
            <person name="Dodson R.J."/>
            <person name="Gwinn M.L."/>
            <person name="Hickey E.K."/>
            <person name="Peterson J.D."/>
            <person name="Richardson D.L."/>
            <person name="Kerlavage A.R."/>
            <person name="Graham D.E."/>
            <person name="Kyrpides N.C."/>
            <person name="Fleischmann R.D."/>
            <person name="Quackenbush J."/>
            <person name="Lee N.H."/>
            <person name="Sutton G.G."/>
            <person name="Gill S.R."/>
            <person name="Kirkness E.F."/>
            <person name="Dougherty B.A."/>
            <person name="McKenney K."/>
            <person name="Adams M.D."/>
            <person name="Loftus B.J."/>
            <person name="Peterson S.N."/>
            <person name="Reich C.I."/>
            <person name="McNeil L.K."/>
            <person name="Badger J.H."/>
            <person name="Glodek A."/>
            <person name="Zhou L."/>
            <person name="Overbeek R."/>
            <person name="Gocayne J.D."/>
            <person name="Weidman J.F."/>
            <person name="McDonald L.A."/>
            <person name="Utterback T.R."/>
            <person name="Cotton M.D."/>
            <person name="Spriggs T."/>
            <person name="Artiach P."/>
            <person name="Kaine B.P."/>
            <person name="Sykes S.M."/>
            <person name="Sadow P.W."/>
            <person name="D'Andrea K.P."/>
            <person name="Bowman C."/>
            <person name="Fujii C."/>
            <person name="Garland S.A."/>
            <person name="Mason T.M."/>
            <person name="Olsen G.J."/>
            <person name="Fraser C.M."/>
            <person name="Smith H.O."/>
            <person name="Woese C.R."/>
            <person name="Venter J.C."/>
        </authorList>
    </citation>
    <scope>NUCLEOTIDE SEQUENCE [LARGE SCALE GENOMIC DNA]</scope>
    <source>
        <strain>ATCC 49558 / DSM 4304 / JCM 9628 / NBRC 100126 / VC-16</strain>
    </source>
</reference>
<reference key="2">
    <citation type="unpublished observations" date="2001-04">
        <authorList>
            <person name="Medigue C."/>
            <person name="Bocs S."/>
        </authorList>
    </citation>
    <scope>IDENTIFICATION</scope>
</reference>
<organism>
    <name type="scientific">Archaeoglobus fulgidus (strain ATCC 49558 / DSM 4304 / JCM 9628 / NBRC 100126 / VC-16)</name>
    <dbReference type="NCBI Taxonomy" id="224325"/>
    <lineage>
        <taxon>Archaea</taxon>
        <taxon>Methanobacteriati</taxon>
        <taxon>Methanobacteriota</taxon>
        <taxon>Archaeoglobi</taxon>
        <taxon>Archaeoglobales</taxon>
        <taxon>Archaeoglobaceae</taxon>
        <taxon>Archaeoglobus</taxon>
    </lineage>
</organism>
<name>Y07A_ARCFU</name>
<comment type="similarity">
    <text evidence="1">Belongs to the UPF0150 family.</text>
</comment>
<feature type="chain" id="PRO_0000157941" description="UPF0150 protein AF_0072.1">
    <location>
        <begin position="1"/>
        <end position="66"/>
    </location>
</feature>
<evidence type="ECO:0000305" key="1"/>
<gene>
    <name type="ordered locus">AF_0072.1</name>
</gene>